<protein>
    <recommendedName>
        <fullName evidence="1">CinA-like protein</fullName>
    </recommendedName>
</protein>
<proteinExistence type="inferred from homology"/>
<organism>
    <name type="scientific">Leptospira borgpetersenii serovar Hardjo-bovis (strain L550)</name>
    <dbReference type="NCBI Taxonomy" id="355276"/>
    <lineage>
        <taxon>Bacteria</taxon>
        <taxon>Pseudomonadati</taxon>
        <taxon>Spirochaetota</taxon>
        <taxon>Spirochaetia</taxon>
        <taxon>Leptospirales</taxon>
        <taxon>Leptospiraceae</taxon>
        <taxon>Leptospira</taxon>
    </lineage>
</organism>
<name>CINAL_LEPBL</name>
<dbReference type="EMBL" id="CP000348">
    <property type="protein sequence ID" value="ABJ78755.1"/>
    <property type="molecule type" value="Genomic_DNA"/>
</dbReference>
<dbReference type="RefSeq" id="WP_011669988.1">
    <property type="nucleotide sequence ID" value="NC_008508.1"/>
</dbReference>
<dbReference type="SMR" id="Q052J0"/>
<dbReference type="KEGG" id="lbl:LBL_1257"/>
<dbReference type="HOGENOM" id="CLU_030805_9_3_12"/>
<dbReference type="CDD" id="cd00885">
    <property type="entry name" value="cinA"/>
    <property type="match status" value="1"/>
</dbReference>
<dbReference type="Gene3D" id="3.90.950.20">
    <property type="entry name" value="CinA-like"/>
    <property type="match status" value="1"/>
</dbReference>
<dbReference type="Gene3D" id="3.40.980.10">
    <property type="entry name" value="MoaB/Mog-like domain"/>
    <property type="match status" value="1"/>
</dbReference>
<dbReference type="HAMAP" id="MF_00226_B">
    <property type="entry name" value="CinA_B"/>
    <property type="match status" value="1"/>
</dbReference>
<dbReference type="InterPro" id="IPR050101">
    <property type="entry name" value="CinA"/>
</dbReference>
<dbReference type="InterPro" id="IPR036653">
    <property type="entry name" value="CinA-like_C"/>
</dbReference>
<dbReference type="InterPro" id="IPR008136">
    <property type="entry name" value="CinA_C"/>
</dbReference>
<dbReference type="InterPro" id="IPR008135">
    <property type="entry name" value="Competence-induced_CinA"/>
</dbReference>
<dbReference type="InterPro" id="IPR036425">
    <property type="entry name" value="MoaB/Mog-like_dom_sf"/>
</dbReference>
<dbReference type="InterPro" id="IPR001453">
    <property type="entry name" value="MoaB/Mog_dom"/>
</dbReference>
<dbReference type="NCBIfam" id="TIGR00199">
    <property type="entry name" value="PncC_domain"/>
    <property type="match status" value="1"/>
</dbReference>
<dbReference type="PANTHER" id="PTHR13939">
    <property type="entry name" value="NICOTINAMIDE-NUCLEOTIDE AMIDOHYDROLASE PNCC"/>
    <property type="match status" value="1"/>
</dbReference>
<dbReference type="PANTHER" id="PTHR13939:SF0">
    <property type="entry name" value="NMN AMIDOHYDROLASE-LIKE PROTEIN YFAY"/>
    <property type="match status" value="1"/>
</dbReference>
<dbReference type="Pfam" id="PF02464">
    <property type="entry name" value="CinA"/>
    <property type="match status" value="1"/>
</dbReference>
<dbReference type="Pfam" id="PF00994">
    <property type="entry name" value="MoCF_biosynth"/>
    <property type="match status" value="1"/>
</dbReference>
<dbReference type="PIRSF" id="PIRSF006728">
    <property type="entry name" value="CinA"/>
    <property type="match status" value="1"/>
</dbReference>
<dbReference type="SMART" id="SM00852">
    <property type="entry name" value="MoCF_biosynth"/>
    <property type="match status" value="1"/>
</dbReference>
<dbReference type="SUPFAM" id="SSF142433">
    <property type="entry name" value="CinA-like"/>
    <property type="match status" value="1"/>
</dbReference>
<dbReference type="SUPFAM" id="SSF53218">
    <property type="entry name" value="Molybdenum cofactor biosynthesis proteins"/>
    <property type="match status" value="1"/>
</dbReference>
<comment type="similarity">
    <text evidence="1">Belongs to the CinA family.</text>
</comment>
<evidence type="ECO:0000255" key="1">
    <source>
        <dbReference type="HAMAP-Rule" id="MF_00226"/>
    </source>
</evidence>
<gene>
    <name type="ordered locus">LBL_1257</name>
</gene>
<feature type="chain" id="PRO_0000336504" description="CinA-like protein">
    <location>
        <begin position="1"/>
        <end position="418"/>
    </location>
</feature>
<sequence length="418" mass="46187">MSFPKVIVVSTGSELTAGRSQDTNSSWIANELFGMGFTVSKFVVLPDDPVVILEELRTLTELSMRETSILLVMTGGLGPTEDDYTLEAVCRLKGVTTEESPVARQRIETFYKLRGRNFQEAMQTAIRQVFVPKGSIILNNSVGIAPGFITSLAENVHLGCMPGVPGEMTEMFREELAPWILKTYSSRELYSGFRFIWWMSESQFQKEFISKEKAIADGKAIWGVAAKRGYIRASFQSDSRALVDDLLRKLDTFYGTKSTPDIFEELPRMLLEKKITIGTAESCTGGLIAKTFTDVPGSSAYFYGGIISYDNSVKTGILGVKRNTLDEFGAVSRETAKEMAEGALDALGVDYSISVTGIAGPGGGTPQKKVGLVYFGIGQKNEETEIHEHYFPFPRSSFREFAAHTGIYLLYDRLKRSA</sequence>
<reference key="1">
    <citation type="journal article" date="2006" name="Proc. Natl. Acad. Sci. U.S.A.">
        <title>Genome reduction in Leptospira borgpetersenii reflects limited transmission potential.</title>
        <authorList>
            <person name="Bulach D.M."/>
            <person name="Zuerner R.L."/>
            <person name="Wilson P."/>
            <person name="Seemann T."/>
            <person name="McGrath A."/>
            <person name="Cullen P.A."/>
            <person name="Davis J."/>
            <person name="Johnson M."/>
            <person name="Kuczek E."/>
            <person name="Alt D.P."/>
            <person name="Peterson-Burch B."/>
            <person name="Coppel R.L."/>
            <person name="Rood J.I."/>
            <person name="Davies J.K."/>
            <person name="Adler B."/>
        </authorList>
    </citation>
    <scope>NUCLEOTIDE SEQUENCE [LARGE SCALE GENOMIC DNA]</scope>
    <source>
        <strain>L550</strain>
    </source>
</reference>
<accession>Q052J0</accession>